<feature type="chain" id="PRO_0000339336" description="mRNA-decapping enzyme subunit 1">
    <location>
        <begin position="1"/>
        <end position="127"/>
    </location>
</feature>
<feature type="helix" evidence="5">
    <location>
        <begin position="3"/>
        <end position="9"/>
    </location>
</feature>
<feature type="helix" evidence="5">
    <location>
        <begin position="12"/>
        <end position="19"/>
    </location>
</feature>
<feature type="strand" evidence="5">
    <location>
        <begin position="23"/>
        <end position="39"/>
    </location>
</feature>
<feature type="turn" evidence="5">
    <location>
        <begin position="40"/>
        <end position="43"/>
    </location>
</feature>
<feature type="strand" evidence="5">
    <location>
        <begin position="44"/>
        <end position="59"/>
    </location>
</feature>
<feature type="strand" evidence="5">
    <location>
        <begin position="64"/>
        <end position="74"/>
    </location>
</feature>
<feature type="strand" evidence="5">
    <location>
        <begin position="77"/>
        <end position="80"/>
    </location>
</feature>
<feature type="helix" evidence="5">
    <location>
        <begin position="84"/>
        <end position="86"/>
    </location>
</feature>
<feature type="strand" evidence="5">
    <location>
        <begin position="87"/>
        <end position="90"/>
    </location>
</feature>
<feature type="strand" evidence="5">
    <location>
        <begin position="93"/>
        <end position="98"/>
    </location>
</feature>
<feature type="turn" evidence="5">
    <location>
        <begin position="99"/>
        <end position="101"/>
    </location>
</feature>
<feature type="strand" evidence="5">
    <location>
        <begin position="102"/>
        <end position="110"/>
    </location>
</feature>
<feature type="helix" evidence="5">
    <location>
        <begin position="111"/>
        <end position="124"/>
    </location>
</feature>
<dbReference type="EMBL" id="CU329671">
    <property type="protein sequence ID" value="CAB69661.1"/>
    <property type="molecule type" value="Genomic_DNA"/>
</dbReference>
<dbReference type="RefSeq" id="NP_596662.1">
    <property type="nucleotide sequence ID" value="NM_001022584.2"/>
</dbReference>
<dbReference type="PDB" id="2QKL">
    <property type="method" value="X-ray"/>
    <property type="resolution" value="2.33 A"/>
    <property type="chains" value="A=1-127"/>
</dbReference>
<dbReference type="PDB" id="2QKM">
    <property type="method" value="X-ray"/>
    <property type="resolution" value="2.80 A"/>
    <property type="chains" value="A/C/E/G=1-127"/>
</dbReference>
<dbReference type="PDB" id="5J3Q">
    <property type="method" value="X-ray"/>
    <property type="resolution" value="1.87 A"/>
    <property type="chains" value="A/C=1-127"/>
</dbReference>
<dbReference type="PDB" id="5J3T">
    <property type="method" value="X-ray"/>
    <property type="resolution" value="1.60 A"/>
    <property type="chains" value="A=1-127"/>
</dbReference>
<dbReference type="PDB" id="5J3Y">
    <property type="method" value="X-ray"/>
    <property type="resolution" value="3.29 A"/>
    <property type="chains" value="A/C=1-127"/>
</dbReference>
<dbReference type="PDB" id="5JP4">
    <property type="method" value="X-ray"/>
    <property type="resolution" value="2.04 A"/>
    <property type="chains" value="A=1-127"/>
</dbReference>
<dbReference type="PDB" id="5KQ1">
    <property type="method" value="X-ray"/>
    <property type="resolution" value="3.00 A"/>
    <property type="chains" value="A/D=1-127"/>
</dbReference>
<dbReference type="PDB" id="5KQ4">
    <property type="method" value="X-ray"/>
    <property type="resolution" value="2.56 A"/>
    <property type="chains" value="A/D=1-127"/>
</dbReference>
<dbReference type="PDB" id="5N2V">
    <property type="method" value="X-ray"/>
    <property type="resolution" value="3.10 A"/>
    <property type="chains" value="A/D=1-127"/>
</dbReference>
<dbReference type="PDBsum" id="2QKL"/>
<dbReference type="PDBsum" id="2QKM"/>
<dbReference type="PDBsum" id="5J3Q"/>
<dbReference type="PDBsum" id="5J3T"/>
<dbReference type="PDBsum" id="5J3Y"/>
<dbReference type="PDBsum" id="5JP4"/>
<dbReference type="PDBsum" id="5KQ1"/>
<dbReference type="PDBsum" id="5KQ4"/>
<dbReference type="PDBsum" id="5N2V"/>
<dbReference type="SMR" id="Q9P805"/>
<dbReference type="BioGRID" id="277548">
    <property type="interactions" value="18"/>
</dbReference>
<dbReference type="DIP" id="DIP-29008N"/>
<dbReference type="FunCoup" id="Q9P805">
    <property type="interactions" value="2"/>
</dbReference>
<dbReference type="IntAct" id="Q9P805">
    <property type="interactions" value="3"/>
</dbReference>
<dbReference type="MINT" id="Q9P805"/>
<dbReference type="STRING" id="284812.Q9P805"/>
<dbReference type="PaxDb" id="4896-SPBC3B9.21.1"/>
<dbReference type="EnsemblFungi" id="SPBC3B9.21.1">
    <property type="protein sequence ID" value="SPBC3B9.21.1:pep"/>
    <property type="gene ID" value="SPBC3B9.21"/>
</dbReference>
<dbReference type="GeneID" id="2541033"/>
<dbReference type="KEGG" id="spo:2541033"/>
<dbReference type="PomBase" id="SPBC3B9.21">
    <property type="gene designation" value="dcp1"/>
</dbReference>
<dbReference type="VEuPathDB" id="FungiDB:SPBC3B9.21"/>
<dbReference type="eggNOG" id="KOG2868">
    <property type="taxonomic scope" value="Eukaryota"/>
</dbReference>
<dbReference type="HOGENOM" id="CLU_152856_0_0_1"/>
<dbReference type="InParanoid" id="Q9P805"/>
<dbReference type="OMA" id="QVLKFHY"/>
<dbReference type="PhylomeDB" id="Q9P805"/>
<dbReference type="CD-CODE" id="0808F6DD">
    <property type="entry name" value="P-body"/>
</dbReference>
<dbReference type="CD-CODE" id="5113914A">
    <property type="entry name" value="Synthetic Condensate 000100"/>
</dbReference>
<dbReference type="EvolutionaryTrace" id="Q9P805"/>
<dbReference type="PRO" id="PR:Q9P805"/>
<dbReference type="Proteomes" id="UP000002485">
    <property type="component" value="Chromosome II"/>
</dbReference>
<dbReference type="GO" id="GO:0010494">
    <property type="term" value="C:cytoplasmic stress granule"/>
    <property type="evidence" value="ECO:0000314"/>
    <property type="project" value="PomBase"/>
</dbReference>
<dbReference type="GO" id="GO:0005829">
    <property type="term" value="C:cytosol"/>
    <property type="evidence" value="ECO:0007005"/>
    <property type="project" value="PomBase"/>
</dbReference>
<dbReference type="GO" id="GO:0005634">
    <property type="term" value="C:nucleus"/>
    <property type="evidence" value="ECO:0007005"/>
    <property type="project" value="PomBase"/>
</dbReference>
<dbReference type="GO" id="GO:0000932">
    <property type="term" value="C:P-body"/>
    <property type="evidence" value="ECO:0000314"/>
    <property type="project" value="PomBase"/>
</dbReference>
<dbReference type="GO" id="GO:0098745">
    <property type="term" value="C:RNA decapping complex"/>
    <property type="evidence" value="ECO:0000314"/>
    <property type="project" value="PomBase"/>
</dbReference>
<dbReference type="GO" id="GO:0170008">
    <property type="term" value="F:mRNA phosphatase activator activity"/>
    <property type="evidence" value="ECO:0000314"/>
    <property type="project" value="PomBase"/>
</dbReference>
<dbReference type="GO" id="GO:0003723">
    <property type="term" value="F:RNA binding"/>
    <property type="evidence" value="ECO:0007669"/>
    <property type="project" value="UniProtKB-KW"/>
</dbReference>
<dbReference type="GO" id="GO:0000290">
    <property type="term" value="P:deadenylation-dependent decapping of nuclear-transcribed mRNA"/>
    <property type="evidence" value="ECO:0000315"/>
    <property type="project" value="PomBase"/>
</dbReference>
<dbReference type="GO" id="GO:0110156">
    <property type="term" value="P:mRNA methylguanosine-cap decapping"/>
    <property type="evidence" value="ECO:0000314"/>
    <property type="project" value="PomBase"/>
</dbReference>
<dbReference type="GO" id="GO:0006397">
    <property type="term" value="P:mRNA processing"/>
    <property type="evidence" value="ECO:0007669"/>
    <property type="project" value="UniProtKB-KW"/>
</dbReference>
<dbReference type="GO" id="GO:0000956">
    <property type="term" value="P:nuclear-transcribed mRNA catabolic process"/>
    <property type="evidence" value="ECO:0000315"/>
    <property type="project" value="PomBase"/>
</dbReference>
<dbReference type="GO" id="GO:0000184">
    <property type="term" value="P:nuclear-transcribed mRNA catabolic process, nonsense-mediated decay"/>
    <property type="evidence" value="ECO:0007669"/>
    <property type="project" value="UniProtKB-KW"/>
</dbReference>
<dbReference type="CDD" id="cd09804">
    <property type="entry name" value="Dcp1"/>
    <property type="match status" value="1"/>
</dbReference>
<dbReference type="FunFam" id="2.30.29.30:FF:001123">
    <property type="entry name" value="mRNA-decapping enzyme subunit 1"/>
    <property type="match status" value="1"/>
</dbReference>
<dbReference type="Gene3D" id="2.30.29.30">
    <property type="entry name" value="Pleckstrin-homology domain (PH domain)/Phosphotyrosine-binding domain (PTB)"/>
    <property type="match status" value="1"/>
</dbReference>
<dbReference type="InterPro" id="IPR010334">
    <property type="entry name" value="Dcp1"/>
</dbReference>
<dbReference type="InterPro" id="IPR011993">
    <property type="entry name" value="PH-like_dom_sf"/>
</dbReference>
<dbReference type="PANTHER" id="PTHR16290:SF0">
    <property type="entry name" value="DECAPPING PROTEIN 1, ISOFORM A"/>
    <property type="match status" value="1"/>
</dbReference>
<dbReference type="PANTHER" id="PTHR16290">
    <property type="entry name" value="TRANSCRIPTION FACTOR SMIF DECAPPING ENZYME DCP1"/>
    <property type="match status" value="1"/>
</dbReference>
<dbReference type="Pfam" id="PF06058">
    <property type="entry name" value="DCP1"/>
    <property type="match status" value="1"/>
</dbReference>
<dbReference type="SUPFAM" id="SSF50729">
    <property type="entry name" value="PH domain-like"/>
    <property type="match status" value="1"/>
</dbReference>
<comment type="function">
    <text evidence="2">Component of the decapping complex necessary for the degradation of mRNAs, both in normal mRNA turnover and in nonsense-mediated mRNA decay. Removes the 7-methyl guanine cap structure from mRNA molecules, yielding a 5'-phosphorylated mRNA fragment and 7m-GDP. Decapping is the major pathway of mRNA degradation in yeast. It occurs through deadenylation, decapping and subsequent 5' to 3' exonucleolytic decay of the transcript body.</text>
</comment>
<comment type="subunit">
    <text evidence="1">Component of the decapping complex composed of dcp1 and dcp2.</text>
</comment>
<comment type="interaction">
    <interactant intactId="EBI-7557105">
        <id>Q9P805</id>
    </interactant>
    <interactant intactId="EBI-3647323">
        <id>O13828</id>
        <label>dcp2</label>
    </interactant>
    <organismsDiffer>false</organismsDiffer>
    <experiments>7</experiments>
</comment>
<comment type="subcellular location">
    <subcellularLocation>
        <location evidence="3">Cytoplasm</location>
    </subcellularLocation>
    <subcellularLocation>
        <location evidence="3">Nucleus</location>
    </subcellularLocation>
</comment>
<comment type="similarity">
    <text evidence="4">Belongs to the DCP1 family.</text>
</comment>
<proteinExistence type="evidence at protein level"/>
<gene>
    <name type="primary">dcp1</name>
    <name type="ORF">SPBC3B9.21</name>
</gene>
<organism>
    <name type="scientific">Schizosaccharomyces pombe (strain 972 / ATCC 24843)</name>
    <name type="common">Fission yeast</name>
    <dbReference type="NCBI Taxonomy" id="284812"/>
    <lineage>
        <taxon>Eukaryota</taxon>
        <taxon>Fungi</taxon>
        <taxon>Dikarya</taxon>
        <taxon>Ascomycota</taxon>
        <taxon>Taphrinomycotina</taxon>
        <taxon>Schizosaccharomycetes</taxon>
        <taxon>Schizosaccharomycetales</taxon>
        <taxon>Schizosaccharomycetaceae</taxon>
        <taxon>Schizosaccharomyces</taxon>
    </lineage>
</organism>
<sequence length="127" mass="14983">MEDENILRNAVNLQVLKFHYPEIESIIDIASHVAVYQFDVGSQKWLKTSIEGTFFLVKDQRARVGYVILNRNSPENLYLFINHPSNVHLVDRYLIHRTENQHVVGLWMFDPNDMSRIFNIVKESLLR</sequence>
<protein>
    <recommendedName>
        <fullName>mRNA-decapping enzyme subunit 1</fullName>
    </recommendedName>
</protein>
<evidence type="ECO:0000250" key="1"/>
<evidence type="ECO:0000269" key="2">
    <source>
    </source>
</evidence>
<evidence type="ECO:0000269" key="3">
    <source>
    </source>
</evidence>
<evidence type="ECO:0000305" key="4"/>
<evidence type="ECO:0007829" key="5">
    <source>
        <dbReference type="PDB" id="5J3T"/>
    </source>
</evidence>
<name>DCP1_SCHPO</name>
<keyword id="KW-0002">3D-structure</keyword>
<keyword id="KW-0963">Cytoplasm</keyword>
<keyword id="KW-0507">mRNA processing</keyword>
<keyword id="KW-0866">Nonsense-mediated mRNA decay</keyword>
<keyword id="KW-0539">Nucleus</keyword>
<keyword id="KW-1185">Reference proteome</keyword>
<keyword id="KW-0694">RNA-binding</keyword>
<accession>Q9P805</accession>
<reference key="1">
    <citation type="journal article" date="2002" name="Nature">
        <title>The genome sequence of Schizosaccharomyces pombe.</title>
        <authorList>
            <person name="Wood V."/>
            <person name="Gwilliam R."/>
            <person name="Rajandream M.A."/>
            <person name="Lyne M.H."/>
            <person name="Lyne R."/>
            <person name="Stewart A."/>
            <person name="Sgouros J.G."/>
            <person name="Peat N."/>
            <person name="Hayles J."/>
            <person name="Baker S.G."/>
            <person name="Basham D."/>
            <person name="Bowman S."/>
            <person name="Brooks K."/>
            <person name="Brown D."/>
            <person name="Brown S."/>
            <person name="Chillingworth T."/>
            <person name="Churcher C.M."/>
            <person name="Collins M."/>
            <person name="Connor R."/>
            <person name="Cronin A."/>
            <person name="Davis P."/>
            <person name="Feltwell T."/>
            <person name="Fraser A."/>
            <person name="Gentles S."/>
            <person name="Goble A."/>
            <person name="Hamlin N."/>
            <person name="Harris D.E."/>
            <person name="Hidalgo J."/>
            <person name="Hodgson G."/>
            <person name="Holroyd S."/>
            <person name="Hornsby T."/>
            <person name="Howarth S."/>
            <person name="Huckle E.J."/>
            <person name="Hunt S."/>
            <person name="Jagels K."/>
            <person name="James K.D."/>
            <person name="Jones L."/>
            <person name="Jones M."/>
            <person name="Leather S."/>
            <person name="McDonald S."/>
            <person name="McLean J."/>
            <person name="Mooney P."/>
            <person name="Moule S."/>
            <person name="Mungall K.L."/>
            <person name="Murphy L.D."/>
            <person name="Niblett D."/>
            <person name="Odell C."/>
            <person name="Oliver K."/>
            <person name="O'Neil S."/>
            <person name="Pearson D."/>
            <person name="Quail M.A."/>
            <person name="Rabbinowitsch E."/>
            <person name="Rutherford K.M."/>
            <person name="Rutter S."/>
            <person name="Saunders D."/>
            <person name="Seeger K."/>
            <person name="Sharp S."/>
            <person name="Skelton J."/>
            <person name="Simmonds M.N."/>
            <person name="Squares R."/>
            <person name="Squares S."/>
            <person name="Stevens K."/>
            <person name="Taylor K."/>
            <person name="Taylor R.G."/>
            <person name="Tivey A."/>
            <person name="Walsh S.V."/>
            <person name="Warren T."/>
            <person name="Whitehead S."/>
            <person name="Woodward J.R."/>
            <person name="Volckaert G."/>
            <person name="Aert R."/>
            <person name="Robben J."/>
            <person name="Grymonprez B."/>
            <person name="Weltjens I."/>
            <person name="Vanstreels E."/>
            <person name="Rieger M."/>
            <person name="Schaefer M."/>
            <person name="Mueller-Auer S."/>
            <person name="Gabel C."/>
            <person name="Fuchs M."/>
            <person name="Duesterhoeft A."/>
            <person name="Fritzc C."/>
            <person name="Holzer E."/>
            <person name="Moestl D."/>
            <person name="Hilbert H."/>
            <person name="Borzym K."/>
            <person name="Langer I."/>
            <person name="Beck A."/>
            <person name="Lehrach H."/>
            <person name="Reinhardt R."/>
            <person name="Pohl T.M."/>
            <person name="Eger P."/>
            <person name="Zimmermann W."/>
            <person name="Wedler H."/>
            <person name="Wambutt R."/>
            <person name="Purnelle B."/>
            <person name="Goffeau A."/>
            <person name="Cadieu E."/>
            <person name="Dreano S."/>
            <person name="Gloux S."/>
            <person name="Lelaure V."/>
            <person name="Mottier S."/>
            <person name="Galibert F."/>
            <person name="Aves S.J."/>
            <person name="Xiang Z."/>
            <person name="Hunt C."/>
            <person name="Moore K."/>
            <person name="Hurst S.M."/>
            <person name="Lucas M."/>
            <person name="Rochet M."/>
            <person name="Gaillardin C."/>
            <person name="Tallada V.A."/>
            <person name="Garzon A."/>
            <person name="Thode G."/>
            <person name="Daga R.R."/>
            <person name="Cruzado L."/>
            <person name="Jimenez J."/>
            <person name="Sanchez M."/>
            <person name="del Rey F."/>
            <person name="Benito J."/>
            <person name="Dominguez A."/>
            <person name="Revuelta J.L."/>
            <person name="Moreno S."/>
            <person name="Armstrong J."/>
            <person name="Forsburg S.L."/>
            <person name="Cerutti L."/>
            <person name="Lowe T."/>
            <person name="McCombie W.R."/>
            <person name="Paulsen I."/>
            <person name="Potashkin J."/>
            <person name="Shpakovski G.V."/>
            <person name="Ussery D."/>
            <person name="Barrell B.G."/>
            <person name="Nurse P."/>
        </authorList>
    </citation>
    <scope>NUCLEOTIDE SEQUENCE [LARGE SCALE GENOMIC DNA]</scope>
    <source>
        <strain>972 / ATCC 24843</strain>
    </source>
</reference>
<reference key="2">
    <citation type="journal article" date="2004" name="J. Biochem.">
        <title>Decapping reaction of mRNA requires Dcp1 in fission yeast: its characterization in different species from yeast to human.</title>
        <authorList>
            <person name="Sakuno T."/>
            <person name="Araki Y."/>
            <person name="Ohya Y."/>
            <person name="Kofuji S."/>
            <person name="Takahashi S."/>
            <person name="Hoshino S."/>
            <person name="Katada T."/>
        </authorList>
    </citation>
    <scope>FUNCTION</scope>
</reference>
<reference key="3">
    <citation type="journal article" date="2006" name="Nat. Biotechnol.">
        <title>ORFeome cloning and global analysis of protein localization in the fission yeast Schizosaccharomyces pombe.</title>
        <authorList>
            <person name="Matsuyama A."/>
            <person name="Arai R."/>
            <person name="Yashiroda Y."/>
            <person name="Shirai A."/>
            <person name="Kamata A."/>
            <person name="Sekido S."/>
            <person name="Kobayashi Y."/>
            <person name="Hashimoto A."/>
            <person name="Hamamoto M."/>
            <person name="Hiraoka Y."/>
            <person name="Horinouchi S."/>
            <person name="Yoshida M."/>
        </authorList>
    </citation>
    <scope>SUBCELLULAR LOCATION [LARGE SCALE ANALYSIS]</scope>
</reference>